<comment type="function">
    <text evidence="1">Specifically methylates the uridine in position 2552 of 23S rRNA at the 2'-O position of the ribose in the fully assembled 50S ribosomal subunit.</text>
</comment>
<comment type="catalytic activity">
    <reaction evidence="1">
        <text>uridine(2552) in 23S rRNA + S-adenosyl-L-methionine = 2'-O-methyluridine(2552) in 23S rRNA + S-adenosyl-L-homocysteine + H(+)</text>
        <dbReference type="Rhea" id="RHEA:42720"/>
        <dbReference type="Rhea" id="RHEA-COMP:10202"/>
        <dbReference type="Rhea" id="RHEA-COMP:10203"/>
        <dbReference type="ChEBI" id="CHEBI:15378"/>
        <dbReference type="ChEBI" id="CHEBI:57856"/>
        <dbReference type="ChEBI" id="CHEBI:59789"/>
        <dbReference type="ChEBI" id="CHEBI:65315"/>
        <dbReference type="ChEBI" id="CHEBI:74478"/>
        <dbReference type="EC" id="2.1.1.166"/>
    </reaction>
</comment>
<comment type="subcellular location">
    <subcellularLocation>
        <location evidence="1">Cytoplasm</location>
    </subcellularLocation>
</comment>
<comment type="similarity">
    <text evidence="1">Belongs to the class I-like SAM-binding methyltransferase superfamily. RNA methyltransferase RlmE family.</text>
</comment>
<evidence type="ECO:0000255" key="1">
    <source>
        <dbReference type="HAMAP-Rule" id="MF_01547"/>
    </source>
</evidence>
<dbReference type="EC" id="2.1.1.166" evidence="1"/>
<dbReference type="EMBL" id="AM286415">
    <property type="protein sequence ID" value="CAL10553.1"/>
    <property type="molecule type" value="Genomic_DNA"/>
</dbReference>
<dbReference type="RefSeq" id="WP_005175402.1">
    <property type="nucleotide sequence ID" value="NC_008800.1"/>
</dbReference>
<dbReference type="RefSeq" id="YP_001004797.1">
    <property type="nucleotide sequence ID" value="NC_008800.1"/>
</dbReference>
<dbReference type="SMR" id="A1JIW2"/>
<dbReference type="KEGG" id="yen:YE0427"/>
<dbReference type="PATRIC" id="fig|393305.7.peg.523"/>
<dbReference type="eggNOG" id="COG0293">
    <property type="taxonomic scope" value="Bacteria"/>
</dbReference>
<dbReference type="HOGENOM" id="CLU_009422_4_0_6"/>
<dbReference type="OrthoDB" id="9790080at2"/>
<dbReference type="Proteomes" id="UP000000642">
    <property type="component" value="Chromosome"/>
</dbReference>
<dbReference type="GO" id="GO:0005737">
    <property type="term" value="C:cytoplasm"/>
    <property type="evidence" value="ECO:0007669"/>
    <property type="project" value="UniProtKB-SubCell"/>
</dbReference>
<dbReference type="GO" id="GO:0008650">
    <property type="term" value="F:rRNA (uridine-2'-O-)-methyltransferase activity"/>
    <property type="evidence" value="ECO:0007669"/>
    <property type="project" value="UniProtKB-UniRule"/>
</dbReference>
<dbReference type="CDD" id="cd02440">
    <property type="entry name" value="AdoMet_MTases"/>
    <property type="match status" value="1"/>
</dbReference>
<dbReference type="FunFam" id="3.40.50.150:FF:000005">
    <property type="entry name" value="Ribosomal RNA large subunit methyltransferase E"/>
    <property type="match status" value="1"/>
</dbReference>
<dbReference type="Gene3D" id="3.40.50.150">
    <property type="entry name" value="Vaccinia Virus protein VP39"/>
    <property type="match status" value="1"/>
</dbReference>
<dbReference type="HAMAP" id="MF_01547">
    <property type="entry name" value="RNA_methyltr_E"/>
    <property type="match status" value="1"/>
</dbReference>
<dbReference type="InterPro" id="IPR050082">
    <property type="entry name" value="RNA_methyltr_RlmE"/>
</dbReference>
<dbReference type="InterPro" id="IPR002877">
    <property type="entry name" value="RNA_MeTrfase_FtsJ_dom"/>
</dbReference>
<dbReference type="InterPro" id="IPR015507">
    <property type="entry name" value="rRNA-MeTfrase_E"/>
</dbReference>
<dbReference type="InterPro" id="IPR004512">
    <property type="entry name" value="rRNA_MeTrfase_gammaproteobac"/>
</dbReference>
<dbReference type="InterPro" id="IPR029063">
    <property type="entry name" value="SAM-dependent_MTases_sf"/>
</dbReference>
<dbReference type="NCBIfam" id="NF008390">
    <property type="entry name" value="PRK11188.1"/>
    <property type="match status" value="1"/>
</dbReference>
<dbReference type="NCBIfam" id="TIGR00438">
    <property type="entry name" value="rrmJ"/>
    <property type="match status" value="1"/>
</dbReference>
<dbReference type="PANTHER" id="PTHR10920">
    <property type="entry name" value="RIBOSOMAL RNA METHYLTRANSFERASE"/>
    <property type="match status" value="1"/>
</dbReference>
<dbReference type="PANTHER" id="PTHR10920:SF18">
    <property type="entry name" value="RRNA METHYLTRANSFERASE 2, MITOCHONDRIAL"/>
    <property type="match status" value="1"/>
</dbReference>
<dbReference type="Pfam" id="PF01728">
    <property type="entry name" value="FtsJ"/>
    <property type="match status" value="1"/>
</dbReference>
<dbReference type="PIRSF" id="PIRSF005461">
    <property type="entry name" value="23S_rRNA_mtase"/>
    <property type="match status" value="1"/>
</dbReference>
<dbReference type="SUPFAM" id="SSF53335">
    <property type="entry name" value="S-adenosyl-L-methionine-dependent methyltransferases"/>
    <property type="match status" value="1"/>
</dbReference>
<protein>
    <recommendedName>
        <fullName evidence="1">Ribosomal RNA large subunit methyltransferase E</fullName>
        <ecNumber evidence="1">2.1.1.166</ecNumber>
    </recommendedName>
    <alternativeName>
        <fullName evidence="1">23S rRNA Um2552 methyltransferase</fullName>
    </alternativeName>
    <alternativeName>
        <fullName evidence="1">rRNA (uridine-2'-O-)-methyltransferase</fullName>
    </alternativeName>
</protein>
<name>RLME_YERE8</name>
<feature type="chain" id="PRO_0000282814" description="Ribosomal RNA large subunit methyltransferase E">
    <location>
        <begin position="1"/>
        <end position="209"/>
    </location>
</feature>
<feature type="active site" description="Proton acceptor" evidence="1">
    <location>
        <position position="164"/>
    </location>
</feature>
<feature type="binding site" evidence="1">
    <location>
        <position position="63"/>
    </location>
    <ligand>
        <name>S-adenosyl-L-methionine</name>
        <dbReference type="ChEBI" id="CHEBI:59789"/>
    </ligand>
</feature>
<feature type="binding site" evidence="1">
    <location>
        <position position="65"/>
    </location>
    <ligand>
        <name>S-adenosyl-L-methionine</name>
        <dbReference type="ChEBI" id="CHEBI:59789"/>
    </ligand>
</feature>
<feature type="binding site" evidence="1">
    <location>
        <position position="83"/>
    </location>
    <ligand>
        <name>S-adenosyl-L-methionine</name>
        <dbReference type="ChEBI" id="CHEBI:59789"/>
    </ligand>
</feature>
<feature type="binding site" evidence="1">
    <location>
        <position position="99"/>
    </location>
    <ligand>
        <name>S-adenosyl-L-methionine</name>
        <dbReference type="ChEBI" id="CHEBI:59789"/>
    </ligand>
</feature>
<feature type="binding site" evidence="1">
    <location>
        <position position="124"/>
    </location>
    <ligand>
        <name>S-adenosyl-L-methionine</name>
        <dbReference type="ChEBI" id="CHEBI:59789"/>
    </ligand>
</feature>
<reference key="1">
    <citation type="journal article" date="2006" name="PLoS Genet.">
        <title>The complete genome sequence and comparative genome analysis of the high pathogenicity Yersinia enterocolitica strain 8081.</title>
        <authorList>
            <person name="Thomson N.R."/>
            <person name="Howard S."/>
            <person name="Wren B.W."/>
            <person name="Holden M.T.G."/>
            <person name="Crossman L."/>
            <person name="Challis G.L."/>
            <person name="Churcher C."/>
            <person name="Mungall K."/>
            <person name="Brooks K."/>
            <person name="Chillingworth T."/>
            <person name="Feltwell T."/>
            <person name="Abdellah Z."/>
            <person name="Hauser H."/>
            <person name="Jagels K."/>
            <person name="Maddison M."/>
            <person name="Moule S."/>
            <person name="Sanders M."/>
            <person name="Whitehead S."/>
            <person name="Quail M.A."/>
            <person name="Dougan G."/>
            <person name="Parkhill J."/>
            <person name="Prentice M.B."/>
        </authorList>
    </citation>
    <scope>NUCLEOTIDE SEQUENCE [LARGE SCALE GENOMIC DNA]</scope>
    <source>
        <strain>NCTC 13174 / 8081</strain>
    </source>
</reference>
<gene>
    <name evidence="1" type="primary">rlmE</name>
    <name evidence="1" type="synonym">ftsJ</name>
    <name evidence="1" type="synonym">rrmJ</name>
    <name type="ordered locus">YE0427</name>
</gene>
<keyword id="KW-0963">Cytoplasm</keyword>
<keyword id="KW-0489">Methyltransferase</keyword>
<keyword id="KW-0698">rRNA processing</keyword>
<keyword id="KW-0949">S-adenosyl-L-methionine</keyword>
<keyword id="KW-0808">Transferase</keyword>
<sequence length="209" mass="23376">MSNKKRSASSSRWLQEHFSDKYVIQAQKKGLRSRAWFKLDEIQQSDKLFKPGMTVVDLGAAPGGWSQYVVTQIGGKGRVIACDLLPMDPIVGVDFLQGDFRDELVLKALLERVGDKKVQVVMCDMAPNMSGTPAVDIPKSMYLVELALDMCRDVLAPGGSFLVKVFQGDGFDEYLREIRSLFTKVKIRKPDASRARSREVYIVATGRKL</sequence>
<organism>
    <name type="scientific">Yersinia enterocolitica serotype O:8 / biotype 1B (strain NCTC 13174 / 8081)</name>
    <dbReference type="NCBI Taxonomy" id="393305"/>
    <lineage>
        <taxon>Bacteria</taxon>
        <taxon>Pseudomonadati</taxon>
        <taxon>Pseudomonadota</taxon>
        <taxon>Gammaproteobacteria</taxon>
        <taxon>Enterobacterales</taxon>
        <taxon>Yersiniaceae</taxon>
        <taxon>Yersinia</taxon>
    </lineage>
</organism>
<proteinExistence type="inferred from homology"/>
<accession>A1JIW2</accession>